<name>CYSD1_ALKEH</name>
<dbReference type="EC" id="2.7.7.4" evidence="1"/>
<dbReference type="EMBL" id="CP000453">
    <property type="protein sequence ID" value="ABI56610.1"/>
    <property type="molecule type" value="Genomic_DNA"/>
</dbReference>
<dbReference type="RefSeq" id="WP_011629005.1">
    <property type="nucleotide sequence ID" value="NC_008340.1"/>
</dbReference>
<dbReference type="SMR" id="Q0A977"/>
<dbReference type="KEGG" id="aeh:Mlg_1261"/>
<dbReference type="eggNOG" id="COG0175">
    <property type="taxonomic scope" value="Bacteria"/>
</dbReference>
<dbReference type="HOGENOM" id="CLU_043026_0_0_6"/>
<dbReference type="OrthoDB" id="9772604at2"/>
<dbReference type="UniPathway" id="UPA00140">
    <property type="reaction ID" value="UER00204"/>
</dbReference>
<dbReference type="Proteomes" id="UP000001962">
    <property type="component" value="Chromosome"/>
</dbReference>
<dbReference type="GO" id="GO:0005524">
    <property type="term" value="F:ATP binding"/>
    <property type="evidence" value="ECO:0007669"/>
    <property type="project" value="UniProtKB-KW"/>
</dbReference>
<dbReference type="GO" id="GO:0004781">
    <property type="term" value="F:sulfate adenylyltransferase (ATP) activity"/>
    <property type="evidence" value="ECO:0007669"/>
    <property type="project" value="UniProtKB-UniRule"/>
</dbReference>
<dbReference type="GO" id="GO:0070814">
    <property type="term" value="P:hydrogen sulfide biosynthetic process"/>
    <property type="evidence" value="ECO:0007669"/>
    <property type="project" value="UniProtKB-UniRule"/>
</dbReference>
<dbReference type="GO" id="GO:0000103">
    <property type="term" value="P:sulfate assimilation"/>
    <property type="evidence" value="ECO:0007669"/>
    <property type="project" value="UniProtKB-UniRule"/>
</dbReference>
<dbReference type="CDD" id="cd23946">
    <property type="entry name" value="Sulfate_adenylyltransferase_2"/>
    <property type="match status" value="1"/>
</dbReference>
<dbReference type="FunFam" id="3.40.50.620:FF:000002">
    <property type="entry name" value="Sulfate adenylyltransferase subunit 2"/>
    <property type="match status" value="1"/>
</dbReference>
<dbReference type="Gene3D" id="3.40.50.620">
    <property type="entry name" value="HUPs"/>
    <property type="match status" value="1"/>
</dbReference>
<dbReference type="HAMAP" id="MF_00064">
    <property type="entry name" value="Sulf_adenylyltr_sub2"/>
    <property type="match status" value="1"/>
</dbReference>
<dbReference type="InterPro" id="IPR002500">
    <property type="entry name" value="PAPS_reduct_dom"/>
</dbReference>
<dbReference type="InterPro" id="IPR014729">
    <property type="entry name" value="Rossmann-like_a/b/a_fold"/>
</dbReference>
<dbReference type="InterPro" id="IPR011784">
    <property type="entry name" value="SO4_adenylTrfase_ssu"/>
</dbReference>
<dbReference type="InterPro" id="IPR050128">
    <property type="entry name" value="Sulfate_adenylyltrnsfr_sub2"/>
</dbReference>
<dbReference type="NCBIfam" id="TIGR02039">
    <property type="entry name" value="CysD"/>
    <property type="match status" value="1"/>
</dbReference>
<dbReference type="NCBIfam" id="NF003587">
    <property type="entry name" value="PRK05253.1"/>
    <property type="match status" value="1"/>
</dbReference>
<dbReference type="NCBIfam" id="NF009214">
    <property type="entry name" value="PRK12563.1"/>
    <property type="match status" value="1"/>
</dbReference>
<dbReference type="PANTHER" id="PTHR43196">
    <property type="entry name" value="SULFATE ADENYLYLTRANSFERASE SUBUNIT 2"/>
    <property type="match status" value="1"/>
</dbReference>
<dbReference type="PANTHER" id="PTHR43196:SF1">
    <property type="entry name" value="SULFATE ADENYLYLTRANSFERASE SUBUNIT 2"/>
    <property type="match status" value="1"/>
</dbReference>
<dbReference type="Pfam" id="PF01507">
    <property type="entry name" value="PAPS_reduct"/>
    <property type="match status" value="1"/>
</dbReference>
<dbReference type="PIRSF" id="PIRSF002936">
    <property type="entry name" value="CysDAde_trans"/>
    <property type="match status" value="1"/>
</dbReference>
<dbReference type="SUPFAM" id="SSF52402">
    <property type="entry name" value="Adenine nucleotide alpha hydrolases-like"/>
    <property type="match status" value="1"/>
</dbReference>
<evidence type="ECO:0000255" key="1">
    <source>
        <dbReference type="HAMAP-Rule" id="MF_00064"/>
    </source>
</evidence>
<evidence type="ECO:0000256" key="2">
    <source>
        <dbReference type="SAM" id="MobiDB-lite"/>
    </source>
</evidence>
<proteinExistence type="inferred from homology"/>
<comment type="function">
    <text evidence="1">With CysN forms the ATP sulfurylase (ATPS) that catalyzes the adenylation of sulfate producing adenosine 5'-phosphosulfate (APS) and diphosphate, the first enzymatic step in sulfur assimilation pathway. APS synthesis involves the formation of a high-energy phosphoric-sulfuric acid anhydride bond driven by GTP hydrolysis by CysN coupled to ATP hydrolysis by CysD.</text>
</comment>
<comment type="catalytic activity">
    <reaction evidence="1">
        <text>sulfate + ATP + H(+) = adenosine 5'-phosphosulfate + diphosphate</text>
        <dbReference type="Rhea" id="RHEA:18133"/>
        <dbReference type="ChEBI" id="CHEBI:15378"/>
        <dbReference type="ChEBI" id="CHEBI:16189"/>
        <dbReference type="ChEBI" id="CHEBI:30616"/>
        <dbReference type="ChEBI" id="CHEBI:33019"/>
        <dbReference type="ChEBI" id="CHEBI:58243"/>
        <dbReference type="EC" id="2.7.7.4"/>
    </reaction>
</comment>
<comment type="pathway">
    <text evidence="1">Sulfur metabolism; hydrogen sulfide biosynthesis; sulfite from sulfate: step 1/3.</text>
</comment>
<comment type="subunit">
    <text evidence="1">Heterodimer composed of CysD, the smaller subunit, and CysN.</text>
</comment>
<comment type="similarity">
    <text evidence="1">Belongs to the PAPS reductase family. CysD subfamily.</text>
</comment>
<reference key="1">
    <citation type="submission" date="2006-08" db="EMBL/GenBank/DDBJ databases">
        <title>Complete sequence of Alkalilimnicola ehrilichei MLHE-1.</title>
        <authorList>
            <person name="Copeland A."/>
            <person name="Lucas S."/>
            <person name="Lapidus A."/>
            <person name="Barry K."/>
            <person name="Detter J.C."/>
            <person name="Glavina del Rio T."/>
            <person name="Hammon N."/>
            <person name="Israni S."/>
            <person name="Dalin E."/>
            <person name="Tice H."/>
            <person name="Pitluck S."/>
            <person name="Sims D."/>
            <person name="Brettin T."/>
            <person name="Bruce D."/>
            <person name="Han C."/>
            <person name="Tapia R."/>
            <person name="Gilna P."/>
            <person name="Schmutz J."/>
            <person name="Larimer F."/>
            <person name="Land M."/>
            <person name="Hauser L."/>
            <person name="Kyrpides N."/>
            <person name="Mikhailova N."/>
            <person name="Oremland R.S."/>
            <person name="Hoeft S.E."/>
            <person name="Switzer-Blum J."/>
            <person name="Kulp T."/>
            <person name="King G."/>
            <person name="Tabita R."/>
            <person name="Witte B."/>
            <person name="Santini J.M."/>
            <person name="Basu P."/>
            <person name="Hollibaugh J.T."/>
            <person name="Xie G."/>
            <person name="Stolz J.F."/>
            <person name="Richardson P."/>
        </authorList>
    </citation>
    <scope>NUCLEOTIDE SEQUENCE [LARGE SCALE GENOMIC DNA]</scope>
    <source>
        <strain>ATCC BAA-1101 / DSM 17681 / MLHE-1</strain>
    </source>
</reference>
<organism>
    <name type="scientific">Alkalilimnicola ehrlichii (strain ATCC BAA-1101 / DSM 17681 / MLHE-1)</name>
    <dbReference type="NCBI Taxonomy" id="187272"/>
    <lineage>
        <taxon>Bacteria</taxon>
        <taxon>Pseudomonadati</taxon>
        <taxon>Pseudomonadota</taxon>
        <taxon>Gammaproteobacteria</taxon>
        <taxon>Chromatiales</taxon>
        <taxon>Ectothiorhodospiraceae</taxon>
        <taxon>Alkalilimnicola</taxon>
    </lineage>
</organism>
<sequence>MSSAATALQGPQPNALPAASHLDRLEAESIHILREVAAEFDNPVMLYSVGKDSSVMLHLARKAFHPGTPPFPLLHVDTTWKFREMIAFRDRMAAESGMALRVHINQEGVARGIGPFSHGSAVHTDVMKTQALKQALDRYGFDAAFGGARRDEEASRAKERVYSFRDRHHRWDPKAQRPELWNVYNGRIHKGESIRVFPLSNWTELDIWLYIHREGIPVVPLYFAAERPVVERDGLLIMVDDDRLPLAPGEIPRLERVRFRTLGCYPLTGAIRSEARSVPEIIAEMLDSSSSERQGRAIDHDQSGSMERKKREGYF</sequence>
<gene>
    <name evidence="1" type="primary">cysD1</name>
    <name type="ordered locus">Mlg_1261</name>
</gene>
<accession>Q0A977</accession>
<protein>
    <recommendedName>
        <fullName evidence="1">Sulfate adenylyltransferase subunit 2 1</fullName>
        <ecNumber evidence="1">2.7.7.4</ecNumber>
    </recommendedName>
    <alternativeName>
        <fullName evidence="1">ATP-sulfurylase small subunit 1</fullName>
    </alternativeName>
    <alternativeName>
        <fullName evidence="1">Sulfate adenylate transferase 1</fullName>
        <shortName evidence="1">SAT 1</shortName>
    </alternativeName>
</protein>
<keyword id="KW-0067">ATP-binding</keyword>
<keyword id="KW-0547">Nucleotide-binding</keyword>
<keyword id="KW-0548">Nucleotidyltransferase</keyword>
<keyword id="KW-1185">Reference proteome</keyword>
<keyword id="KW-0808">Transferase</keyword>
<feature type="chain" id="PRO_0000340175" description="Sulfate adenylyltransferase subunit 2 1">
    <location>
        <begin position="1"/>
        <end position="315"/>
    </location>
</feature>
<feature type="region of interest" description="Disordered" evidence="2">
    <location>
        <begin position="287"/>
        <end position="315"/>
    </location>
</feature>
<feature type="compositionally biased region" description="Basic and acidic residues" evidence="2">
    <location>
        <begin position="293"/>
        <end position="315"/>
    </location>
</feature>